<gene>
    <name evidence="1" type="primary">rplA</name>
    <name type="ordered locus">UPA3_0578</name>
</gene>
<organism>
    <name type="scientific">Ureaplasma parvum serovar 3 (strain ATCC 27815 / 27 / NCTC 11736)</name>
    <dbReference type="NCBI Taxonomy" id="505682"/>
    <lineage>
        <taxon>Bacteria</taxon>
        <taxon>Bacillati</taxon>
        <taxon>Mycoplasmatota</taxon>
        <taxon>Mycoplasmoidales</taxon>
        <taxon>Mycoplasmoidaceae</taxon>
        <taxon>Ureaplasma</taxon>
    </lineage>
</organism>
<name>RL1_UREP2</name>
<feature type="chain" id="PRO_1000086314" description="Large ribosomal subunit protein uL1">
    <location>
        <begin position="1"/>
        <end position="229"/>
    </location>
</feature>
<keyword id="KW-0678">Repressor</keyword>
<keyword id="KW-0687">Ribonucleoprotein</keyword>
<keyword id="KW-0689">Ribosomal protein</keyword>
<keyword id="KW-0694">RNA-binding</keyword>
<keyword id="KW-0699">rRNA-binding</keyword>
<keyword id="KW-0810">Translation regulation</keyword>
<keyword id="KW-0820">tRNA-binding</keyword>
<evidence type="ECO:0000255" key="1">
    <source>
        <dbReference type="HAMAP-Rule" id="MF_01318"/>
    </source>
</evidence>
<evidence type="ECO:0000305" key="2"/>
<accession>B1AJI1</accession>
<reference key="1">
    <citation type="submission" date="2008-02" db="EMBL/GenBank/DDBJ databases">
        <title>Genome sequence of Ureaplasma parvum serovar 3.</title>
        <authorList>
            <person name="Methe B.A."/>
            <person name="Glass J."/>
            <person name="Waites K."/>
            <person name="Shrivastava S."/>
        </authorList>
    </citation>
    <scope>NUCLEOTIDE SEQUENCE [LARGE SCALE GENOMIC DNA]</scope>
    <source>
        <strain>ATCC 27815 / 27 / NCTC 11736</strain>
    </source>
</reference>
<protein>
    <recommendedName>
        <fullName evidence="1">Large ribosomal subunit protein uL1</fullName>
    </recommendedName>
    <alternativeName>
        <fullName evidence="2">50S ribosomal protein L1</fullName>
    </alternativeName>
</protein>
<comment type="function">
    <text evidence="1">Binds directly to 23S rRNA. The L1 stalk is quite mobile in the ribosome, and is involved in E site tRNA release.</text>
</comment>
<comment type="function">
    <text evidence="1">Protein L1 is also a translational repressor protein, it controls the translation of the L11 operon by binding to its mRNA.</text>
</comment>
<comment type="subunit">
    <text evidence="1">Part of the 50S ribosomal subunit.</text>
</comment>
<comment type="similarity">
    <text evidence="1">Belongs to the universal ribosomal protein uL1 family.</text>
</comment>
<sequence length="229" mass="25167">MAKISKKLFAAYEGIDKQKAYPLFDAIKLAQEKSITKFDGSINIAIKLNLDTTKVEQQLRGSISLPNGNGKNVRVLVLSEDITKEEAASVGADYFGGADYIQNIEKMLNQIDVIITNQKMMPLLAKLGKVLGPRGLMPNPKIGTVTNDVLKAVEEFKRGRIEYRTDTYGNIHMSIGRVSFETTKIEENANALLNLIKSKKPATVKGQYIQNIAVSPTMGPGIKVVINNN</sequence>
<dbReference type="EMBL" id="CP000942">
    <property type="protein sequence ID" value="ACA33168.1"/>
    <property type="molecule type" value="Genomic_DNA"/>
</dbReference>
<dbReference type="RefSeq" id="WP_006688527.1">
    <property type="nucleotide sequence ID" value="NC_010503.1"/>
</dbReference>
<dbReference type="SMR" id="B1AJI1"/>
<dbReference type="GeneID" id="29672436"/>
<dbReference type="KEGG" id="upa:UPA3_0578"/>
<dbReference type="HOGENOM" id="CLU_062853_0_0_14"/>
<dbReference type="Proteomes" id="UP000002162">
    <property type="component" value="Chromosome"/>
</dbReference>
<dbReference type="GO" id="GO:0015934">
    <property type="term" value="C:large ribosomal subunit"/>
    <property type="evidence" value="ECO:0007669"/>
    <property type="project" value="InterPro"/>
</dbReference>
<dbReference type="GO" id="GO:0019843">
    <property type="term" value="F:rRNA binding"/>
    <property type="evidence" value="ECO:0007669"/>
    <property type="project" value="UniProtKB-UniRule"/>
</dbReference>
<dbReference type="GO" id="GO:0003735">
    <property type="term" value="F:structural constituent of ribosome"/>
    <property type="evidence" value="ECO:0007669"/>
    <property type="project" value="InterPro"/>
</dbReference>
<dbReference type="GO" id="GO:0000049">
    <property type="term" value="F:tRNA binding"/>
    <property type="evidence" value="ECO:0007669"/>
    <property type="project" value="UniProtKB-KW"/>
</dbReference>
<dbReference type="GO" id="GO:0006417">
    <property type="term" value="P:regulation of translation"/>
    <property type="evidence" value="ECO:0007669"/>
    <property type="project" value="UniProtKB-KW"/>
</dbReference>
<dbReference type="GO" id="GO:0006412">
    <property type="term" value="P:translation"/>
    <property type="evidence" value="ECO:0007669"/>
    <property type="project" value="UniProtKB-UniRule"/>
</dbReference>
<dbReference type="CDD" id="cd00403">
    <property type="entry name" value="Ribosomal_L1"/>
    <property type="match status" value="1"/>
</dbReference>
<dbReference type="FunFam" id="3.40.50.790:FF:000001">
    <property type="entry name" value="50S ribosomal protein L1"/>
    <property type="match status" value="1"/>
</dbReference>
<dbReference type="Gene3D" id="3.30.190.20">
    <property type="match status" value="1"/>
</dbReference>
<dbReference type="Gene3D" id="3.40.50.790">
    <property type="match status" value="1"/>
</dbReference>
<dbReference type="HAMAP" id="MF_01318_B">
    <property type="entry name" value="Ribosomal_uL1_B"/>
    <property type="match status" value="1"/>
</dbReference>
<dbReference type="InterPro" id="IPR005878">
    <property type="entry name" value="Ribosom_uL1_bac-type"/>
</dbReference>
<dbReference type="InterPro" id="IPR002143">
    <property type="entry name" value="Ribosomal_uL1"/>
</dbReference>
<dbReference type="InterPro" id="IPR023674">
    <property type="entry name" value="Ribosomal_uL1-like"/>
</dbReference>
<dbReference type="InterPro" id="IPR028364">
    <property type="entry name" value="Ribosomal_uL1/biogenesis"/>
</dbReference>
<dbReference type="InterPro" id="IPR016095">
    <property type="entry name" value="Ribosomal_uL1_3-a/b-sand"/>
</dbReference>
<dbReference type="InterPro" id="IPR023673">
    <property type="entry name" value="Ribosomal_uL1_CS"/>
</dbReference>
<dbReference type="NCBIfam" id="TIGR01169">
    <property type="entry name" value="rplA_bact"/>
    <property type="match status" value="1"/>
</dbReference>
<dbReference type="PANTHER" id="PTHR36427">
    <property type="entry name" value="54S RIBOSOMAL PROTEIN L1, MITOCHONDRIAL"/>
    <property type="match status" value="1"/>
</dbReference>
<dbReference type="PANTHER" id="PTHR36427:SF3">
    <property type="entry name" value="LARGE RIBOSOMAL SUBUNIT PROTEIN UL1M"/>
    <property type="match status" value="1"/>
</dbReference>
<dbReference type="Pfam" id="PF00687">
    <property type="entry name" value="Ribosomal_L1"/>
    <property type="match status" value="1"/>
</dbReference>
<dbReference type="PIRSF" id="PIRSF002155">
    <property type="entry name" value="Ribosomal_L1"/>
    <property type="match status" value="1"/>
</dbReference>
<dbReference type="SUPFAM" id="SSF56808">
    <property type="entry name" value="Ribosomal protein L1"/>
    <property type="match status" value="1"/>
</dbReference>
<dbReference type="PROSITE" id="PS01199">
    <property type="entry name" value="RIBOSOMAL_L1"/>
    <property type="match status" value="1"/>
</dbReference>
<proteinExistence type="inferred from homology"/>